<feature type="chain" id="PRO_0000326284" description="Matrix protein 1">
    <location>
        <begin position="1"/>
        <end position="252"/>
    </location>
</feature>
<feature type="region of interest" description="Membrane-binding" evidence="1">
    <location>
        <begin position="1"/>
        <end position="164"/>
    </location>
</feature>
<feature type="region of interest" description="RNP-binding" evidence="1">
    <location>
        <begin position="165"/>
        <end position="252"/>
    </location>
</feature>
<feature type="short sequence motif" description="Nuclear localization signal" evidence="1">
    <location>
        <begin position="101"/>
        <end position="105"/>
    </location>
</feature>
<sequence length="252" mass="27891">MSLLTEVETYVLSIVPSGPLKAEIAQRLEDVFAGKNTDLEALMEWLKTRPILSPLTKGILGFVFTLTVPSERGLQRRRFVQNALNGNGDPNNMDRAVKLYRKLKREITFHGAKEVALSYSAGALASCMGLIYNRMGTVTTEVAFGLVCATCEQIADSQHRSHRQMVTTTNPLIRHENRMVLASITAKAMEQMAGSSEQAAEAMEVASQARQMVQAMRTIGTHPSSSAGLKDNLLENLQAYQKRMGVQMQRFK</sequence>
<evidence type="ECO:0000255" key="1">
    <source>
        <dbReference type="HAMAP-Rule" id="MF_04068"/>
    </source>
</evidence>
<dbReference type="EMBL" id="CY015104">
    <property type="protein sequence ID" value="ABI85138.1"/>
    <property type="molecule type" value="Genomic_RNA"/>
</dbReference>
<dbReference type="SMR" id="Q0A2E3"/>
<dbReference type="GO" id="GO:0042025">
    <property type="term" value="C:host cell nucleus"/>
    <property type="evidence" value="ECO:0007669"/>
    <property type="project" value="UniProtKB-SubCell"/>
</dbReference>
<dbReference type="GO" id="GO:0016020">
    <property type="term" value="C:membrane"/>
    <property type="evidence" value="ECO:0007669"/>
    <property type="project" value="UniProtKB-KW"/>
</dbReference>
<dbReference type="GO" id="GO:0055036">
    <property type="term" value="C:virion membrane"/>
    <property type="evidence" value="ECO:0007669"/>
    <property type="project" value="UniProtKB-SubCell"/>
</dbReference>
<dbReference type="GO" id="GO:0003723">
    <property type="term" value="F:RNA binding"/>
    <property type="evidence" value="ECO:0007669"/>
    <property type="project" value="UniProtKB-UniRule"/>
</dbReference>
<dbReference type="GO" id="GO:0039660">
    <property type="term" value="F:structural constituent of virion"/>
    <property type="evidence" value="ECO:0007669"/>
    <property type="project" value="UniProtKB-UniRule"/>
</dbReference>
<dbReference type="GO" id="GO:0046761">
    <property type="term" value="P:viral budding from plasma membrane"/>
    <property type="evidence" value="ECO:0007669"/>
    <property type="project" value="UniProtKB-UniRule"/>
</dbReference>
<dbReference type="FunFam" id="1.10.10.180:FF:000001">
    <property type="entry name" value="Matrix protein 1"/>
    <property type="match status" value="1"/>
</dbReference>
<dbReference type="FunFam" id="1.20.91.10:FF:000001">
    <property type="entry name" value="Matrix protein 1"/>
    <property type="match status" value="1"/>
</dbReference>
<dbReference type="Gene3D" id="1.10.10.180">
    <property type="match status" value="1"/>
</dbReference>
<dbReference type="Gene3D" id="1.20.91.10">
    <property type="match status" value="1"/>
</dbReference>
<dbReference type="HAMAP" id="MF_04068">
    <property type="entry name" value="INFV_M1"/>
    <property type="match status" value="1"/>
</dbReference>
<dbReference type="InterPro" id="IPR036039">
    <property type="entry name" value="Flu_matrix_M1"/>
</dbReference>
<dbReference type="InterPro" id="IPR013188">
    <property type="entry name" value="Flu_matrix_M1_C"/>
</dbReference>
<dbReference type="InterPro" id="IPR001561">
    <property type="entry name" value="Flu_matrix_M1_N"/>
</dbReference>
<dbReference type="InterPro" id="IPR015423">
    <property type="entry name" value="Flu_matrix_M1_N_sub1"/>
</dbReference>
<dbReference type="InterPro" id="IPR015799">
    <property type="entry name" value="Flu_matrix_M1_N_sub2"/>
</dbReference>
<dbReference type="InterPro" id="IPR037533">
    <property type="entry name" value="INFV_M1"/>
</dbReference>
<dbReference type="Pfam" id="PF00598">
    <property type="entry name" value="Flu_M1"/>
    <property type="match status" value="1"/>
</dbReference>
<dbReference type="Pfam" id="PF08289">
    <property type="entry name" value="Flu_M1_C"/>
    <property type="match status" value="1"/>
</dbReference>
<dbReference type="SMART" id="SM00759">
    <property type="entry name" value="Flu_M1_C"/>
    <property type="match status" value="1"/>
</dbReference>
<dbReference type="SUPFAM" id="SSF48145">
    <property type="entry name" value="Influenza virus matrix protein M1"/>
    <property type="match status" value="1"/>
</dbReference>
<keyword id="KW-0025">Alternative splicing</keyword>
<keyword id="KW-1048">Host nucleus</keyword>
<keyword id="KW-0472">Membrane</keyword>
<keyword id="KW-0694">RNA-binding</keyword>
<keyword id="KW-0468">Viral matrix protein</keyword>
<keyword id="KW-0946">Virion</keyword>
<organism>
    <name type="scientific">Influenza A virus (strain A/Turkey/Ontario/7732/1966 H5N9)</name>
    <dbReference type="NCBI Taxonomy" id="380301"/>
    <lineage>
        <taxon>Viruses</taxon>
        <taxon>Riboviria</taxon>
        <taxon>Orthornavirae</taxon>
        <taxon>Negarnaviricota</taxon>
        <taxon>Polyploviricotina</taxon>
        <taxon>Insthoviricetes</taxon>
        <taxon>Articulavirales</taxon>
        <taxon>Orthomyxoviridae</taxon>
        <taxon>Alphainfluenzavirus</taxon>
        <taxon>Alphainfluenzavirus influenzae</taxon>
        <taxon>Influenza A virus</taxon>
    </lineage>
</organism>
<gene>
    <name evidence="1" type="primary">M</name>
</gene>
<proteinExistence type="inferred from homology"/>
<accession>Q0A2E3</accession>
<protein>
    <recommendedName>
        <fullName evidence="1">Matrix protein 1</fullName>
        <shortName evidence="1">M1</shortName>
    </recommendedName>
</protein>
<name>M1_I66A0</name>
<comment type="function">
    <text evidence="1">Plays critical roles in virus replication, from virus entry and uncoating to assembly and budding of the virus particle. M1 binding to ribonucleocapsids (RNPs) in nucleus seems to inhibit viral transcription. Interaction of viral NEP with M1-RNP is thought to promote nuclear export of the complex, which is targeted to the virion assembly site at the apical plasma membrane in polarized epithelial cells. Interactions with NA and HA may bring M1, a non-raft-associated protein, into lipid rafts. Forms a continuous shell on the inner side of the lipid bilayer in virion, where it binds the RNP. During virus entry into cell, the M2 ion channel acidifies the internal virion core, inducing M1 dissociation from the RNP. M1-free RNPs are transported to the nucleus, where viral transcription and replication can take place.</text>
</comment>
<comment type="function">
    <text evidence="1">Determines the virion's shape: spherical or filamentous. Clinical isolates of influenza are characterized by the presence of significant proportion of filamentous virions, whereas after multiple passage on eggs or cell culture, virions have only spherical morphology. Filamentous virions are thought to be important to infect neighboring cells, and spherical virions more suited to spread through aerosol between hosts organisms.</text>
</comment>
<comment type="subunit">
    <text evidence="1">Homodimer and homomultimer. Interacts with NEP. Binds ribonucleocapsid by both interacting with genomic RNA and NP protein. May interact with HA and NA. Cannot bind NP without genomic RNA.</text>
</comment>
<comment type="subcellular location">
    <subcellularLocation>
        <location evidence="1">Virion membrane</location>
        <topology evidence="1">Peripheral membrane protein</topology>
        <orientation evidence="1">Cytoplasmic side</orientation>
    </subcellularLocation>
    <subcellularLocation>
        <location evidence="1">Host nucleus</location>
    </subcellularLocation>
</comment>
<comment type="alternative products">
    <event type="alternative splicing"/>
    <isoform>
        <id>Q0A2E3-1</id>
        <name>M1</name>
        <sequence type="displayed"/>
    </isoform>
    <isoform>
        <id>Q0A2E4-1</id>
        <name>M2</name>
        <sequence type="external"/>
    </isoform>
    <text>Only the first 9 residues are shared by the 2 isoforms.</text>
</comment>
<comment type="miscellaneous">
    <text evidence="1">Most abundant protein in virion. When expressed alone can form virus-like particles in transfected cells.</text>
</comment>
<comment type="similarity">
    <text evidence="1">Belongs to the influenza viruses Matrix protein M1 family.</text>
</comment>
<organismHost>
    <name type="scientific">Aves</name>
    <dbReference type="NCBI Taxonomy" id="8782"/>
</organismHost>
<reference key="1">
    <citation type="journal article" date="2006" name="Science">
        <title>Large-scale sequence analysis of avian influenza isolates.</title>
        <authorList>
            <person name="Obenauer J.C."/>
            <person name="Denson J."/>
            <person name="Mehta P.K."/>
            <person name="Su X."/>
            <person name="Mukatira S."/>
            <person name="Finkelstein D.B."/>
            <person name="Xu X."/>
            <person name="Wang J."/>
            <person name="Ma J."/>
            <person name="Fan Y."/>
            <person name="Rakestraw K.M."/>
            <person name="Webster R.G."/>
            <person name="Hoffmann E."/>
            <person name="Krauss S."/>
            <person name="Zheng J."/>
            <person name="Zhang Z."/>
            <person name="Naeve C.W."/>
        </authorList>
    </citation>
    <scope>NUCLEOTIDE SEQUENCE [GENOMIC RNA]</scope>
</reference>